<feature type="chain" id="PRO_0000174969" description="Thymidine kinase">
    <location>
        <begin position="1"/>
        <end position="196"/>
    </location>
</feature>
<feature type="active site" description="Proton acceptor" evidence="1">
    <location>
        <position position="89"/>
    </location>
</feature>
<feature type="binding site" evidence="1">
    <location>
        <begin position="9"/>
        <end position="16"/>
    </location>
    <ligand>
        <name>ATP</name>
        <dbReference type="ChEBI" id="CHEBI:30616"/>
    </ligand>
</feature>
<feature type="binding site" evidence="1">
    <location>
        <begin position="88"/>
        <end position="91"/>
    </location>
    <ligand>
        <name>ATP</name>
        <dbReference type="ChEBI" id="CHEBI:30616"/>
    </ligand>
</feature>
<feature type="binding site" evidence="1">
    <location>
        <position position="146"/>
    </location>
    <ligand>
        <name>Zn(2+)</name>
        <dbReference type="ChEBI" id="CHEBI:29105"/>
    </ligand>
</feature>
<feature type="binding site" evidence="1">
    <location>
        <position position="148"/>
    </location>
    <ligand>
        <name>Zn(2+)</name>
        <dbReference type="ChEBI" id="CHEBI:29105"/>
    </ligand>
</feature>
<feature type="binding site" evidence="1">
    <location>
        <position position="183"/>
    </location>
    <ligand>
        <name>Zn(2+)</name>
        <dbReference type="ChEBI" id="CHEBI:29105"/>
    </ligand>
</feature>
<feature type="binding site" evidence="1">
    <location>
        <position position="186"/>
    </location>
    <ligand>
        <name>Zn(2+)</name>
        <dbReference type="ChEBI" id="CHEBI:29105"/>
    </ligand>
</feature>
<accession>Q83A42</accession>
<dbReference type="EC" id="2.7.1.21" evidence="1"/>
<dbReference type="EMBL" id="AE016828">
    <property type="protein sequence ID" value="AAO91553.1"/>
    <property type="molecule type" value="Genomic_DNA"/>
</dbReference>
<dbReference type="RefSeq" id="NP_821039.1">
    <property type="nucleotide sequence ID" value="NC_002971.3"/>
</dbReference>
<dbReference type="RefSeq" id="WP_010958632.1">
    <property type="nucleotide sequence ID" value="NC_002971.4"/>
</dbReference>
<dbReference type="SMR" id="Q83A42"/>
<dbReference type="STRING" id="227377.CBU_2069"/>
<dbReference type="DNASU" id="1209982"/>
<dbReference type="EnsemblBacteria" id="AAO91553">
    <property type="protein sequence ID" value="AAO91553"/>
    <property type="gene ID" value="CBU_2069"/>
</dbReference>
<dbReference type="GeneID" id="1209982"/>
<dbReference type="KEGG" id="cbu:CBU_2069"/>
<dbReference type="PATRIC" id="fig|227377.7.peg.2059"/>
<dbReference type="eggNOG" id="COG1435">
    <property type="taxonomic scope" value="Bacteria"/>
</dbReference>
<dbReference type="HOGENOM" id="CLU_064400_2_1_6"/>
<dbReference type="OrthoDB" id="9781579at2"/>
<dbReference type="Proteomes" id="UP000002671">
    <property type="component" value="Chromosome"/>
</dbReference>
<dbReference type="GO" id="GO:0005829">
    <property type="term" value="C:cytosol"/>
    <property type="evidence" value="ECO:0000318"/>
    <property type="project" value="GO_Central"/>
</dbReference>
<dbReference type="GO" id="GO:0005524">
    <property type="term" value="F:ATP binding"/>
    <property type="evidence" value="ECO:0007669"/>
    <property type="project" value="UniProtKB-UniRule"/>
</dbReference>
<dbReference type="GO" id="GO:0004797">
    <property type="term" value="F:thymidine kinase activity"/>
    <property type="evidence" value="ECO:0000318"/>
    <property type="project" value="GO_Central"/>
</dbReference>
<dbReference type="GO" id="GO:0008270">
    <property type="term" value="F:zinc ion binding"/>
    <property type="evidence" value="ECO:0007669"/>
    <property type="project" value="UniProtKB-UniRule"/>
</dbReference>
<dbReference type="GO" id="GO:0071897">
    <property type="term" value="P:DNA biosynthetic process"/>
    <property type="evidence" value="ECO:0007669"/>
    <property type="project" value="UniProtKB-KW"/>
</dbReference>
<dbReference type="GO" id="GO:0046104">
    <property type="term" value="P:thymidine metabolic process"/>
    <property type="evidence" value="ECO:0000318"/>
    <property type="project" value="GO_Central"/>
</dbReference>
<dbReference type="Gene3D" id="3.30.60.20">
    <property type="match status" value="1"/>
</dbReference>
<dbReference type="Gene3D" id="3.40.50.300">
    <property type="entry name" value="P-loop containing nucleotide triphosphate hydrolases"/>
    <property type="match status" value="1"/>
</dbReference>
<dbReference type="HAMAP" id="MF_00124">
    <property type="entry name" value="Thymidine_kinase"/>
    <property type="match status" value="1"/>
</dbReference>
<dbReference type="InterPro" id="IPR027417">
    <property type="entry name" value="P-loop_NTPase"/>
</dbReference>
<dbReference type="InterPro" id="IPR001267">
    <property type="entry name" value="Thymidine_kinase"/>
</dbReference>
<dbReference type="InterPro" id="IPR020633">
    <property type="entry name" value="Thymidine_kinase_CS"/>
</dbReference>
<dbReference type="NCBIfam" id="NF003300">
    <property type="entry name" value="PRK04296.1-5"/>
    <property type="match status" value="1"/>
</dbReference>
<dbReference type="PANTHER" id="PTHR11441">
    <property type="entry name" value="THYMIDINE KINASE"/>
    <property type="match status" value="1"/>
</dbReference>
<dbReference type="PANTHER" id="PTHR11441:SF0">
    <property type="entry name" value="THYMIDINE KINASE, CYTOSOLIC"/>
    <property type="match status" value="1"/>
</dbReference>
<dbReference type="Pfam" id="PF00265">
    <property type="entry name" value="TK"/>
    <property type="match status" value="1"/>
</dbReference>
<dbReference type="PIRSF" id="PIRSF035805">
    <property type="entry name" value="TK_cell"/>
    <property type="match status" value="1"/>
</dbReference>
<dbReference type="SUPFAM" id="SSF57716">
    <property type="entry name" value="Glucocorticoid receptor-like (DNA-binding domain)"/>
    <property type="match status" value="1"/>
</dbReference>
<dbReference type="SUPFAM" id="SSF52540">
    <property type="entry name" value="P-loop containing nucleoside triphosphate hydrolases"/>
    <property type="match status" value="1"/>
</dbReference>
<dbReference type="PROSITE" id="PS00603">
    <property type="entry name" value="TK_CELLULAR_TYPE"/>
    <property type="match status" value="1"/>
</dbReference>
<evidence type="ECO:0000255" key="1">
    <source>
        <dbReference type="HAMAP-Rule" id="MF_00124"/>
    </source>
</evidence>
<proteinExistence type="inferred from homology"/>
<sequence>MAKLHFYYSAMNAGKSTTLLQSSYNYNERGMDTLVFLPVVDDREGERKIATRIGLSGKTIALTKDTNLFKCISDKLAENPNIRCVLVDEAQFLTKSQVEALALVTDELNLPVLAYGIRTDFQGEPFEGSVYLLAWADLLIEIKTICHCGRKATMNLRIDDEGNPIREGEQIRLGGNDRYTATCRKHFRLGQPTQTK</sequence>
<gene>
    <name evidence="1" type="primary">tdk</name>
    <name type="ordered locus">CBU_2069</name>
</gene>
<reference key="1">
    <citation type="journal article" date="2003" name="Proc. Natl. Acad. Sci. U.S.A.">
        <title>Complete genome sequence of the Q-fever pathogen, Coxiella burnetii.</title>
        <authorList>
            <person name="Seshadri R."/>
            <person name="Paulsen I.T."/>
            <person name="Eisen J.A."/>
            <person name="Read T.D."/>
            <person name="Nelson K.E."/>
            <person name="Nelson W.C."/>
            <person name="Ward N.L."/>
            <person name="Tettelin H."/>
            <person name="Davidsen T.M."/>
            <person name="Beanan M.J."/>
            <person name="DeBoy R.T."/>
            <person name="Daugherty S.C."/>
            <person name="Brinkac L.M."/>
            <person name="Madupu R."/>
            <person name="Dodson R.J."/>
            <person name="Khouri H.M."/>
            <person name="Lee K.H."/>
            <person name="Carty H.A."/>
            <person name="Scanlan D."/>
            <person name="Heinzen R.A."/>
            <person name="Thompson H.A."/>
            <person name="Samuel J.E."/>
            <person name="Fraser C.M."/>
            <person name="Heidelberg J.F."/>
        </authorList>
    </citation>
    <scope>NUCLEOTIDE SEQUENCE [LARGE SCALE GENOMIC DNA]</scope>
    <source>
        <strain>RSA 493 / Nine Mile phase I</strain>
    </source>
</reference>
<organism>
    <name type="scientific">Coxiella burnetii (strain RSA 493 / Nine Mile phase I)</name>
    <dbReference type="NCBI Taxonomy" id="227377"/>
    <lineage>
        <taxon>Bacteria</taxon>
        <taxon>Pseudomonadati</taxon>
        <taxon>Pseudomonadota</taxon>
        <taxon>Gammaproteobacteria</taxon>
        <taxon>Legionellales</taxon>
        <taxon>Coxiellaceae</taxon>
        <taxon>Coxiella</taxon>
    </lineage>
</organism>
<comment type="catalytic activity">
    <reaction evidence="1">
        <text>thymidine + ATP = dTMP + ADP + H(+)</text>
        <dbReference type="Rhea" id="RHEA:19129"/>
        <dbReference type="ChEBI" id="CHEBI:15378"/>
        <dbReference type="ChEBI" id="CHEBI:17748"/>
        <dbReference type="ChEBI" id="CHEBI:30616"/>
        <dbReference type="ChEBI" id="CHEBI:63528"/>
        <dbReference type="ChEBI" id="CHEBI:456216"/>
        <dbReference type="EC" id="2.7.1.21"/>
    </reaction>
</comment>
<comment type="subunit">
    <text evidence="1">Homotetramer.</text>
</comment>
<comment type="subcellular location">
    <subcellularLocation>
        <location evidence="1">Cytoplasm</location>
    </subcellularLocation>
</comment>
<comment type="similarity">
    <text evidence="1">Belongs to the thymidine kinase family.</text>
</comment>
<name>KITH_COXBU</name>
<protein>
    <recommendedName>
        <fullName evidence="1">Thymidine kinase</fullName>
        <ecNumber evidence="1">2.7.1.21</ecNumber>
    </recommendedName>
</protein>
<keyword id="KW-0067">ATP-binding</keyword>
<keyword id="KW-0963">Cytoplasm</keyword>
<keyword id="KW-0237">DNA synthesis</keyword>
<keyword id="KW-0418">Kinase</keyword>
<keyword id="KW-0479">Metal-binding</keyword>
<keyword id="KW-0547">Nucleotide-binding</keyword>
<keyword id="KW-1185">Reference proteome</keyword>
<keyword id="KW-0808">Transferase</keyword>
<keyword id="KW-0862">Zinc</keyword>